<name>FER_GUITH</name>
<dbReference type="EMBL" id="AF041468">
    <property type="protein sequence ID" value="AAC35732.1"/>
    <property type="molecule type" value="Genomic_DNA"/>
</dbReference>
<dbReference type="RefSeq" id="NP_050798.1">
    <property type="nucleotide sequence ID" value="NC_000926.1"/>
</dbReference>
<dbReference type="SMR" id="O78510"/>
<dbReference type="GeneID" id="857106"/>
<dbReference type="HOGENOM" id="CLU_082632_7_3_1"/>
<dbReference type="OMA" id="CEQNIEL"/>
<dbReference type="GO" id="GO:0009507">
    <property type="term" value="C:chloroplast"/>
    <property type="evidence" value="ECO:0007669"/>
    <property type="project" value="UniProtKB-SubCell"/>
</dbReference>
<dbReference type="GO" id="GO:0051537">
    <property type="term" value="F:2 iron, 2 sulfur cluster binding"/>
    <property type="evidence" value="ECO:0007669"/>
    <property type="project" value="UniProtKB-KW"/>
</dbReference>
<dbReference type="GO" id="GO:0009055">
    <property type="term" value="F:electron transfer activity"/>
    <property type="evidence" value="ECO:0007669"/>
    <property type="project" value="InterPro"/>
</dbReference>
<dbReference type="GO" id="GO:0046872">
    <property type="term" value="F:metal ion binding"/>
    <property type="evidence" value="ECO:0007669"/>
    <property type="project" value="UniProtKB-KW"/>
</dbReference>
<dbReference type="GO" id="GO:0022900">
    <property type="term" value="P:electron transport chain"/>
    <property type="evidence" value="ECO:0007669"/>
    <property type="project" value="InterPro"/>
</dbReference>
<dbReference type="CDD" id="cd00207">
    <property type="entry name" value="fer2"/>
    <property type="match status" value="1"/>
</dbReference>
<dbReference type="FunFam" id="3.10.20.30:FF:000014">
    <property type="entry name" value="Ferredoxin"/>
    <property type="match status" value="1"/>
</dbReference>
<dbReference type="Gene3D" id="3.10.20.30">
    <property type="match status" value="1"/>
</dbReference>
<dbReference type="InterPro" id="IPR036010">
    <property type="entry name" value="2Fe-2S_ferredoxin-like_sf"/>
</dbReference>
<dbReference type="InterPro" id="IPR001041">
    <property type="entry name" value="2Fe-2S_ferredoxin-type"/>
</dbReference>
<dbReference type="InterPro" id="IPR006058">
    <property type="entry name" value="2Fe2S_fd_BS"/>
</dbReference>
<dbReference type="InterPro" id="IPR012675">
    <property type="entry name" value="Beta-grasp_dom_sf"/>
</dbReference>
<dbReference type="InterPro" id="IPR010241">
    <property type="entry name" value="Fd_pln"/>
</dbReference>
<dbReference type="NCBIfam" id="TIGR02008">
    <property type="entry name" value="fdx_plant"/>
    <property type="match status" value="1"/>
</dbReference>
<dbReference type="PANTHER" id="PTHR43112">
    <property type="entry name" value="FERREDOXIN"/>
    <property type="match status" value="1"/>
</dbReference>
<dbReference type="PANTHER" id="PTHR43112:SF3">
    <property type="entry name" value="FERREDOXIN-2, CHLOROPLASTIC"/>
    <property type="match status" value="1"/>
</dbReference>
<dbReference type="Pfam" id="PF00111">
    <property type="entry name" value="Fer2"/>
    <property type="match status" value="1"/>
</dbReference>
<dbReference type="SUPFAM" id="SSF54292">
    <property type="entry name" value="2Fe-2S ferredoxin-like"/>
    <property type="match status" value="1"/>
</dbReference>
<dbReference type="PROSITE" id="PS00197">
    <property type="entry name" value="2FE2S_FER_1"/>
    <property type="match status" value="1"/>
</dbReference>
<dbReference type="PROSITE" id="PS51085">
    <property type="entry name" value="2FE2S_FER_2"/>
    <property type="match status" value="1"/>
</dbReference>
<reference key="1">
    <citation type="journal article" date="1999" name="J. Mol. Evol.">
        <title>The plastid genome of the cryptophyte alga, Guillardia theta: complete sequence and conserved synteny groups confirm its common ancestry with red algae.</title>
        <authorList>
            <person name="Douglas S.E."/>
            <person name="Penny S.L."/>
        </authorList>
    </citation>
    <scope>NUCLEOTIDE SEQUENCE [LARGE SCALE GENOMIC DNA]</scope>
</reference>
<protein>
    <recommendedName>
        <fullName>Ferredoxin</fullName>
    </recommendedName>
</protein>
<geneLocation type="chloroplast"/>
<proteinExistence type="inferred from homology"/>
<organism>
    <name type="scientific">Guillardia theta</name>
    <name type="common">Cryptophyte</name>
    <name type="synonym">Cryptomonas phi</name>
    <dbReference type="NCBI Taxonomy" id="55529"/>
    <lineage>
        <taxon>Eukaryota</taxon>
        <taxon>Cryptophyceae</taxon>
        <taxon>Pyrenomonadales</taxon>
        <taxon>Geminigeraceae</taxon>
        <taxon>Guillardia</taxon>
    </lineage>
</organism>
<evidence type="ECO:0000250" key="1"/>
<evidence type="ECO:0000255" key="2">
    <source>
        <dbReference type="PROSITE-ProRule" id="PRU00465"/>
    </source>
</evidence>
<evidence type="ECO:0000305" key="3"/>
<keyword id="KW-0001">2Fe-2S</keyword>
<keyword id="KW-0150">Chloroplast</keyword>
<keyword id="KW-0249">Electron transport</keyword>
<keyword id="KW-0408">Iron</keyword>
<keyword id="KW-0411">Iron-sulfur</keyword>
<keyword id="KW-0479">Metal-binding</keyword>
<keyword id="KW-0934">Plastid</keyword>
<keyword id="KW-0813">Transport</keyword>
<accession>O78510</accession>
<sequence length="97" mass="10281">MATYKVKLSGEGVDKTIDCPDDQYILDAAEEQGIDLPYSCRAGACSTCAGKVAAGSVDQSDQSFLDDSQIGDGFVLTCVAYPTSDCTILTHQEEGLY</sequence>
<gene>
    <name type="primary">petF</name>
</gene>
<comment type="function">
    <text>Ferredoxins are iron-sulfur proteins that transfer electrons in a wide variety of metabolic reactions.</text>
</comment>
<comment type="cofactor">
    <cofactor>
        <name>[2Fe-2S] cluster</name>
        <dbReference type="ChEBI" id="CHEBI:190135"/>
    </cofactor>
    <text>Binds 1 [2Fe-2S] cluster.</text>
</comment>
<comment type="subunit">
    <text evidence="1">Forms a complex with heterodimeric ferredoxin-thioredoxin reductase (FTR) and thioredoxin.</text>
</comment>
<comment type="subcellular location">
    <subcellularLocation>
        <location>Plastid</location>
        <location>Chloroplast</location>
    </subcellularLocation>
</comment>
<comment type="similarity">
    <text evidence="3">Belongs to the 2Fe2S plant-type ferredoxin family.</text>
</comment>
<feature type="initiator methionine" description="Removed" evidence="1">
    <location>
        <position position="1"/>
    </location>
</feature>
<feature type="chain" id="PRO_0000189335" description="Ferredoxin">
    <location>
        <begin position="2"/>
        <end position="97"/>
    </location>
</feature>
<feature type="domain" description="2Fe-2S ferredoxin-type" evidence="2">
    <location>
        <begin position="4"/>
        <end position="94"/>
    </location>
</feature>
<feature type="binding site" evidence="2">
    <location>
        <position position="40"/>
    </location>
    <ligand>
        <name>[2Fe-2S] cluster</name>
        <dbReference type="ChEBI" id="CHEBI:190135"/>
    </ligand>
</feature>
<feature type="binding site" evidence="2">
    <location>
        <position position="45"/>
    </location>
    <ligand>
        <name>[2Fe-2S] cluster</name>
        <dbReference type="ChEBI" id="CHEBI:190135"/>
    </ligand>
</feature>
<feature type="binding site" evidence="2">
    <location>
        <position position="48"/>
    </location>
    <ligand>
        <name>[2Fe-2S] cluster</name>
        <dbReference type="ChEBI" id="CHEBI:190135"/>
    </ligand>
</feature>
<feature type="binding site" evidence="2">
    <location>
        <position position="78"/>
    </location>
    <ligand>
        <name>[2Fe-2S] cluster</name>
        <dbReference type="ChEBI" id="CHEBI:190135"/>
    </ligand>
</feature>